<organism>
    <name type="scientific">Sulfurovum sp. (strain NBC37-1)</name>
    <dbReference type="NCBI Taxonomy" id="387093"/>
    <lineage>
        <taxon>Bacteria</taxon>
        <taxon>Pseudomonadati</taxon>
        <taxon>Campylobacterota</taxon>
        <taxon>Epsilonproteobacteria</taxon>
        <taxon>Campylobacterales</taxon>
        <taxon>Sulfurovaceae</taxon>
        <taxon>Sulfurovum</taxon>
    </lineage>
</organism>
<protein>
    <recommendedName>
        <fullName evidence="1">tRNA-2-methylthio-N(6)-dimethylallyladenosine synthase</fullName>
        <ecNumber evidence="1">2.8.4.3</ecNumber>
    </recommendedName>
    <alternativeName>
        <fullName evidence="1">(Dimethylallyl)adenosine tRNA methylthiotransferase MiaB</fullName>
    </alternativeName>
    <alternativeName>
        <fullName evidence="1">tRNA-i(6)A37 methylthiotransferase</fullName>
    </alternativeName>
</protein>
<comment type="function">
    <text evidence="1">Catalyzes the methylthiolation of N6-(dimethylallyl)adenosine (i(6)A), leading to the formation of 2-methylthio-N6-(dimethylallyl)adenosine (ms(2)i(6)A) at position 37 in tRNAs that read codons beginning with uridine.</text>
</comment>
<comment type="catalytic activity">
    <reaction evidence="1">
        <text>N(6)-dimethylallyladenosine(37) in tRNA + (sulfur carrier)-SH + AH2 + 2 S-adenosyl-L-methionine = 2-methylsulfanyl-N(6)-dimethylallyladenosine(37) in tRNA + (sulfur carrier)-H + 5'-deoxyadenosine + L-methionine + A + S-adenosyl-L-homocysteine + 2 H(+)</text>
        <dbReference type="Rhea" id="RHEA:37067"/>
        <dbReference type="Rhea" id="RHEA-COMP:10375"/>
        <dbReference type="Rhea" id="RHEA-COMP:10376"/>
        <dbReference type="Rhea" id="RHEA-COMP:14737"/>
        <dbReference type="Rhea" id="RHEA-COMP:14739"/>
        <dbReference type="ChEBI" id="CHEBI:13193"/>
        <dbReference type="ChEBI" id="CHEBI:15378"/>
        <dbReference type="ChEBI" id="CHEBI:17319"/>
        <dbReference type="ChEBI" id="CHEBI:17499"/>
        <dbReference type="ChEBI" id="CHEBI:29917"/>
        <dbReference type="ChEBI" id="CHEBI:57844"/>
        <dbReference type="ChEBI" id="CHEBI:57856"/>
        <dbReference type="ChEBI" id="CHEBI:59789"/>
        <dbReference type="ChEBI" id="CHEBI:64428"/>
        <dbReference type="ChEBI" id="CHEBI:74415"/>
        <dbReference type="ChEBI" id="CHEBI:74417"/>
        <dbReference type="EC" id="2.8.4.3"/>
    </reaction>
</comment>
<comment type="cofactor">
    <cofactor evidence="1">
        <name>[4Fe-4S] cluster</name>
        <dbReference type="ChEBI" id="CHEBI:49883"/>
    </cofactor>
    <text evidence="1">Binds 2 [4Fe-4S] clusters. One cluster is coordinated with 3 cysteines and an exchangeable S-adenosyl-L-methionine.</text>
</comment>
<comment type="subunit">
    <text evidence="1">Monomer.</text>
</comment>
<comment type="subcellular location">
    <subcellularLocation>
        <location evidence="1">Cytoplasm</location>
    </subcellularLocation>
</comment>
<comment type="similarity">
    <text evidence="1">Belongs to the methylthiotransferase family. MiaB subfamily.</text>
</comment>
<comment type="sequence caution" evidence="3">
    <conflict type="erroneous initiation">
        <sequence resource="EMBL-CDS" id="BAF73139"/>
    </conflict>
</comment>
<sequence>MKKLFIETLGCAMNVRDSEHMIAELNQKEPYELTQNVEEADLIIINTCSVREKPVAKLFSEIGVFNKYKKPGAKIGVAGCTASHLGKDIIKRAPSVDFVIGARNVSKITEVVDKKHAVEIDTDYDESTYAFGEYRTNPFKAMVNISIGCDKSCTFCIVPATRGDEISIPSDLLVQEITKAVATGAKEVMLLGQNVNNYGRRFGATEEKIDFTGLLQKISKIEGLERIRFTSPHPLHMDDAFIQEFASNPKICKQIHVPLQSGSTSLLKVMKRGYTKENFLGRCEKIRMLCPEATISTDIIVGFPGETEADFEDTMDVLEKVRFEQLFSFKYSPRPHTEAAEFEEQIDNKIAGERLTRLQTRHTEILDEIMDAQLGKVHEVYFDELKSNGRVSGRSDDGKLVFVEGSEELLGKIVDVRIIKTSRGALDGVLV</sequence>
<name>MIAB_SULNB</name>
<accession>A6QCD0</accession>
<feature type="chain" id="PRO_0000374590" description="tRNA-2-methylthio-N(6)-dimethylallyladenosine synthase">
    <location>
        <begin position="1"/>
        <end position="431"/>
    </location>
</feature>
<feature type="domain" description="MTTase N-terminal" evidence="1">
    <location>
        <begin position="2"/>
        <end position="117"/>
    </location>
</feature>
<feature type="domain" description="Radical SAM core" evidence="2">
    <location>
        <begin position="135"/>
        <end position="368"/>
    </location>
</feature>
<feature type="domain" description="TRAM" evidence="1">
    <location>
        <begin position="371"/>
        <end position="431"/>
    </location>
</feature>
<feature type="binding site" evidence="1">
    <location>
        <position position="11"/>
    </location>
    <ligand>
        <name>[4Fe-4S] cluster</name>
        <dbReference type="ChEBI" id="CHEBI:49883"/>
        <label>1</label>
    </ligand>
</feature>
<feature type="binding site" evidence="1">
    <location>
        <position position="48"/>
    </location>
    <ligand>
        <name>[4Fe-4S] cluster</name>
        <dbReference type="ChEBI" id="CHEBI:49883"/>
        <label>1</label>
    </ligand>
</feature>
<feature type="binding site" evidence="1">
    <location>
        <position position="80"/>
    </location>
    <ligand>
        <name>[4Fe-4S] cluster</name>
        <dbReference type="ChEBI" id="CHEBI:49883"/>
        <label>1</label>
    </ligand>
</feature>
<feature type="binding site" evidence="1">
    <location>
        <position position="149"/>
    </location>
    <ligand>
        <name>[4Fe-4S] cluster</name>
        <dbReference type="ChEBI" id="CHEBI:49883"/>
        <label>2</label>
        <note>4Fe-4S-S-AdoMet</note>
    </ligand>
</feature>
<feature type="binding site" evidence="1">
    <location>
        <position position="153"/>
    </location>
    <ligand>
        <name>[4Fe-4S] cluster</name>
        <dbReference type="ChEBI" id="CHEBI:49883"/>
        <label>2</label>
        <note>4Fe-4S-S-AdoMet</note>
    </ligand>
</feature>
<feature type="binding site" evidence="1">
    <location>
        <position position="156"/>
    </location>
    <ligand>
        <name>[4Fe-4S] cluster</name>
        <dbReference type="ChEBI" id="CHEBI:49883"/>
        <label>2</label>
        <note>4Fe-4S-S-AdoMet</note>
    </ligand>
</feature>
<dbReference type="EC" id="2.8.4.3" evidence="1"/>
<dbReference type="EMBL" id="AP009179">
    <property type="protein sequence ID" value="BAF73139.1"/>
    <property type="status" value="ALT_INIT"/>
    <property type="molecule type" value="Genomic_DNA"/>
</dbReference>
<dbReference type="RefSeq" id="WP_041672773.1">
    <property type="nucleotide sequence ID" value="NC_009663.1"/>
</dbReference>
<dbReference type="SMR" id="A6QCD0"/>
<dbReference type="STRING" id="387093.SUN_2199"/>
<dbReference type="KEGG" id="sun:SUN_2199"/>
<dbReference type="eggNOG" id="COG0621">
    <property type="taxonomic scope" value="Bacteria"/>
</dbReference>
<dbReference type="HOGENOM" id="CLU_018697_2_0_7"/>
<dbReference type="OrthoDB" id="9805215at2"/>
<dbReference type="Proteomes" id="UP000006378">
    <property type="component" value="Chromosome"/>
</dbReference>
<dbReference type="GO" id="GO:0005829">
    <property type="term" value="C:cytosol"/>
    <property type="evidence" value="ECO:0007669"/>
    <property type="project" value="TreeGrafter"/>
</dbReference>
<dbReference type="GO" id="GO:0051539">
    <property type="term" value="F:4 iron, 4 sulfur cluster binding"/>
    <property type="evidence" value="ECO:0007669"/>
    <property type="project" value="UniProtKB-UniRule"/>
</dbReference>
<dbReference type="GO" id="GO:0046872">
    <property type="term" value="F:metal ion binding"/>
    <property type="evidence" value="ECO:0007669"/>
    <property type="project" value="UniProtKB-KW"/>
</dbReference>
<dbReference type="GO" id="GO:0035597">
    <property type="term" value="F:N6-isopentenyladenosine methylthiotransferase activity"/>
    <property type="evidence" value="ECO:0007669"/>
    <property type="project" value="TreeGrafter"/>
</dbReference>
<dbReference type="CDD" id="cd01335">
    <property type="entry name" value="Radical_SAM"/>
    <property type="match status" value="1"/>
</dbReference>
<dbReference type="FunFam" id="3.40.50.12160:FF:000003">
    <property type="entry name" value="CDK5 regulatory subunit-associated protein 1"/>
    <property type="match status" value="1"/>
</dbReference>
<dbReference type="FunFam" id="3.80.30.20:FF:000001">
    <property type="entry name" value="tRNA-2-methylthio-N(6)-dimethylallyladenosine synthase 2"/>
    <property type="match status" value="1"/>
</dbReference>
<dbReference type="Gene3D" id="3.40.50.12160">
    <property type="entry name" value="Methylthiotransferase, N-terminal domain"/>
    <property type="match status" value="1"/>
</dbReference>
<dbReference type="Gene3D" id="3.80.30.20">
    <property type="entry name" value="tm_1862 like domain"/>
    <property type="match status" value="1"/>
</dbReference>
<dbReference type="HAMAP" id="MF_01864">
    <property type="entry name" value="tRNA_metthiotr_MiaB"/>
    <property type="match status" value="1"/>
</dbReference>
<dbReference type="InterPro" id="IPR006638">
    <property type="entry name" value="Elp3/MiaA/NifB-like_rSAM"/>
</dbReference>
<dbReference type="InterPro" id="IPR005839">
    <property type="entry name" value="Methylthiotransferase"/>
</dbReference>
<dbReference type="InterPro" id="IPR020612">
    <property type="entry name" value="Methylthiotransferase_CS"/>
</dbReference>
<dbReference type="InterPro" id="IPR013848">
    <property type="entry name" value="Methylthiotransferase_N"/>
</dbReference>
<dbReference type="InterPro" id="IPR038135">
    <property type="entry name" value="Methylthiotransferase_N_sf"/>
</dbReference>
<dbReference type="InterPro" id="IPR006463">
    <property type="entry name" value="MiaB_methiolase"/>
</dbReference>
<dbReference type="InterPro" id="IPR007197">
    <property type="entry name" value="rSAM"/>
</dbReference>
<dbReference type="InterPro" id="IPR023404">
    <property type="entry name" value="rSAM_horseshoe"/>
</dbReference>
<dbReference type="InterPro" id="IPR002792">
    <property type="entry name" value="TRAM_dom"/>
</dbReference>
<dbReference type="NCBIfam" id="TIGR01574">
    <property type="entry name" value="miaB-methiolase"/>
    <property type="match status" value="1"/>
</dbReference>
<dbReference type="NCBIfam" id="TIGR00089">
    <property type="entry name" value="MiaB/RimO family radical SAM methylthiotransferase"/>
    <property type="match status" value="1"/>
</dbReference>
<dbReference type="PANTHER" id="PTHR43020">
    <property type="entry name" value="CDK5 REGULATORY SUBUNIT-ASSOCIATED PROTEIN 1"/>
    <property type="match status" value="1"/>
</dbReference>
<dbReference type="PANTHER" id="PTHR43020:SF2">
    <property type="entry name" value="MITOCHONDRIAL TRNA METHYLTHIOTRANSFERASE CDK5RAP1"/>
    <property type="match status" value="1"/>
</dbReference>
<dbReference type="Pfam" id="PF04055">
    <property type="entry name" value="Radical_SAM"/>
    <property type="match status" value="1"/>
</dbReference>
<dbReference type="Pfam" id="PF01938">
    <property type="entry name" value="TRAM"/>
    <property type="match status" value="1"/>
</dbReference>
<dbReference type="Pfam" id="PF00919">
    <property type="entry name" value="UPF0004"/>
    <property type="match status" value="1"/>
</dbReference>
<dbReference type="SFLD" id="SFLDF00273">
    <property type="entry name" value="(dimethylallyl)adenosine_tRNA"/>
    <property type="match status" value="1"/>
</dbReference>
<dbReference type="SFLD" id="SFLDG01082">
    <property type="entry name" value="B12-binding_domain_containing"/>
    <property type="match status" value="1"/>
</dbReference>
<dbReference type="SFLD" id="SFLDG01061">
    <property type="entry name" value="methylthiotransferase"/>
    <property type="match status" value="1"/>
</dbReference>
<dbReference type="SMART" id="SM00729">
    <property type="entry name" value="Elp3"/>
    <property type="match status" value="1"/>
</dbReference>
<dbReference type="SUPFAM" id="SSF102114">
    <property type="entry name" value="Radical SAM enzymes"/>
    <property type="match status" value="1"/>
</dbReference>
<dbReference type="PROSITE" id="PS51449">
    <property type="entry name" value="MTTASE_N"/>
    <property type="match status" value="1"/>
</dbReference>
<dbReference type="PROSITE" id="PS01278">
    <property type="entry name" value="MTTASE_RADICAL"/>
    <property type="match status" value="1"/>
</dbReference>
<dbReference type="PROSITE" id="PS51918">
    <property type="entry name" value="RADICAL_SAM"/>
    <property type="match status" value="1"/>
</dbReference>
<dbReference type="PROSITE" id="PS50926">
    <property type="entry name" value="TRAM"/>
    <property type="match status" value="1"/>
</dbReference>
<gene>
    <name evidence="1" type="primary">miaB</name>
    <name type="ordered locus">SUN_2199</name>
</gene>
<proteinExistence type="inferred from homology"/>
<reference key="1">
    <citation type="journal article" date="2007" name="Proc. Natl. Acad. Sci. U.S.A.">
        <title>Deep-sea vent epsilon-proteobacterial genomes provide insights into emergence of pathogens.</title>
        <authorList>
            <person name="Nakagawa S."/>
            <person name="Takaki Y."/>
            <person name="Shimamura S."/>
            <person name="Reysenbach A.-L."/>
            <person name="Takai K."/>
            <person name="Horikoshi K."/>
        </authorList>
    </citation>
    <scope>NUCLEOTIDE SEQUENCE [LARGE SCALE GENOMIC DNA]</scope>
    <source>
        <strain>NBC37-1</strain>
    </source>
</reference>
<keyword id="KW-0004">4Fe-4S</keyword>
<keyword id="KW-0963">Cytoplasm</keyword>
<keyword id="KW-0408">Iron</keyword>
<keyword id="KW-0411">Iron-sulfur</keyword>
<keyword id="KW-0479">Metal-binding</keyword>
<keyword id="KW-0949">S-adenosyl-L-methionine</keyword>
<keyword id="KW-0808">Transferase</keyword>
<keyword id="KW-0819">tRNA processing</keyword>
<evidence type="ECO:0000255" key="1">
    <source>
        <dbReference type="HAMAP-Rule" id="MF_01864"/>
    </source>
</evidence>
<evidence type="ECO:0000255" key="2">
    <source>
        <dbReference type="PROSITE-ProRule" id="PRU01266"/>
    </source>
</evidence>
<evidence type="ECO:0000305" key="3"/>